<reference key="1">
    <citation type="journal article" date="1996" name="J. Biol. Chem.">
        <title>Purification, kinetic properties, and cDNA cloning of mammalian betaine-homocysteine methyltransferase.</title>
        <authorList>
            <person name="Garrow T.A."/>
        </authorList>
    </citation>
    <scope>NUCLEOTIDE SEQUENCE [MRNA] OF 1-273</scope>
    <scope>PROTEIN SEQUENCE OF 2-22 AND 257-278</scope>
    <scope>FUNCTION</scope>
    <scope>CATALYTIC ACTIVITY</scope>
    <scope>BIOPHYSICOCHEMICAL PROPERTIES</scope>
    <scope>ACTIVITY REGULATION</scope>
    <source>
        <tissue>Liver</tissue>
    </source>
</reference>
<reference key="2">
    <citation type="journal article" date="1997" name="Arch. Biochem. Biophys.">
        <title>Betaine-homocysteine methyltransferase expression in porcine and human tissues and chromosomal localization of the human gene.</title>
        <authorList>
            <person name="Sunden S.L.F."/>
            <person name="Renduchintala M.S."/>
            <person name="Park E.I."/>
            <person name="Miklasz S.D."/>
            <person name="Garrow T.A."/>
        </authorList>
    </citation>
    <scope>TISSUE SPECIFICITY</scope>
</reference>
<proteinExistence type="evidence at protein level"/>
<dbReference type="EC" id="2.1.1.5" evidence="6"/>
<dbReference type="EMBL" id="U53421">
    <property type="protein sequence ID" value="AAC48632.1"/>
    <property type="molecule type" value="mRNA"/>
</dbReference>
<dbReference type="SMR" id="Q95332"/>
<dbReference type="MINT" id="Q95332"/>
<dbReference type="STRING" id="9823.ENSSSCP00000074281"/>
<dbReference type="GlyGen" id="Q95332">
    <property type="glycosylation" value="1 site"/>
</dbReference>
<dbReference type="PaxDb" id="9823-ENSSSCP00000015001"/>
<dbReference type="PeptideAtlas" id="Q95332"/>
<dbReference type="eggNOG" id="KOG1579">
    <property type="taxonomic scope" value="Eukaryota"/>
</dbReference>
<dbReference type="HOGENOM" id="CLU_047457_0_0_1"/>
<dbReference type="InParanoid" id="Q95332"/>
<dbReference type="BRENDA" id="2.1.1.5">
    <property type="organism ID" value="6170"/>
</dbReference>
<dbReference type="UniPathway" id="UPA00051">
    <property type="reaction ID" value="UER00083"/>
</dbReference>
<dbReference type="UniPathway" id="UPA00291">
    <property type="reaction ID" value="UER00432"/>
</dbReference>
<dbReference type="Proteomes" id="UP000008227">
    <property type="component" value="Unplaced"/>
</dbReference>
<dbReference type="Proteomes" id="UP000314985">
    <property type="component" value="Unplaced"/>
</dbReference>
<dbReference type="Proteomes" id="UP000694570">
    <property type="component" value="Unplaced"/>
</dbReference>
<dbReference type="Proteomes" id="UP000694571">
    <property type="component" value="Unplaced"/>
</dbReference>
<dbReference type="Proteomes" id="UP000694720">
    <property type="component" value="Unplaced"/>
</dbReference>
<dbReference type="Proteomes" id="UP000694722">
    <property type="component" value="Unplaced"/>
</dbReference>
<dbReference type="Proteomes" id="UP000694723">
    <property type="component" value="Unplaced"/>
</dbReference>
<dbReference type="Proteomes" id="UP000694724">
    <property type="component" value="Unplaced"/>
</dbReference>
<dbReference type="Proteomes" id="UP000694725">
    <property type="component" value="Unplaced"/>
</dbReference>
<dbReference type="Proteomes" id="UP000694726">
    <property type="component" value="Unplaced"/>
</dbReference>
<dbReference type="Proteomes" id="UP000694727">
    <property type="component" value="Unplaced"/>
</dbReference>
<dbReference type="Proteomes" id="UP000694728">
    <property type="component" value="Unplaced"/>
</dbReference>
<dbReference type="GO" id="GO:0005829">
    <property type="term" value="C:cytosol"/>
    <property type="evidence" value="ECO:0000318"/>
    <property type="project" value="GO_Central"/>
</dbReference>
<dbReference type="GO" id="GO:0005634">
    <property type="term" value="C:nucleus"/>
    <property type="evidence" value="ECO:0007669"/>
    <property type="project" value="UniProtKB-SubCell"/>
</dbReference>
<dbReference type="GO" id="GO:0047150">
    <property type="term" value="F:betaine-homocysteine S-methyltransferase activity"/>
    <property type="evidence" value="ECO:0000314"/>
    <property type="project" value="UniProtKB"/>
</dbReference>
<dbReference type="GO" id="GO:0008270">
    <property type="term" value="F:zinc ion binding"/>
    <property type="evidence" value="ECO:0007669"/>
    <property type="project" value="InterPro"/>
</dbReference>
<dbReference type="GO" id="GO:0006579">
    <property type="term" value="P:amino-acid betaine catabolic process"/>
    <property type="evidence" value="ECO:0007669"/>
    <property type="project" value="UniProtKB-UniPathway"/>
</dbReference>
<dbReference type="GO" id="GO:0071267">
    <property type="term" value="P:L-methionine salvage"/>
    <property type="evidence" value="ECO:0000318"/>
    <property type="project" value="GO_Central"/>
</dbReference>
<dbReference type="GO" id="GO:0032259">
    <property type="term" value="P:methylation"/>
    <property type="evidence" value="ECO:0007669"/>
    <property type="project" value="UniProtKB-KW"/>
</dbReference>
<dbReference type="FunFam" id="3.20.20.330:FF:000003">
    <property type="entry name" value="Betaine--homocysteine S-methyltransferase 1"/>
    <property type="match status" value="1"/>
</dbReference>
<dbReference type="Gene3D" id="3.20.20.330">
    <property type="entry name" value="Homocysteine-binding-like domain"/>
    <property type="match status" value="1"/>
</dbReference>
<dbReference type="InterPro" id="IPR017226">
    <property type="entry name" value="Betaine-hCys_S-MeTrfase_BHMT"/>
</dbReference>
<dbReference type="InterPro" id="IPR051524">
    <property type="entry name" value="BHMT"/>
</dbReference>
<dbReference type="InterPro" id="IPR003726">
    <property type="entry name" value="HCY_dom"/>
</dbReference>
<dbReference type="InterPro" id="IPR036589">
    <property type="entry name" value="HCY_dom_sf"/>
</dbReference>
<dbReference type="PANTHER" id="PTHR46120">
    <property type="entry name" value="BETAINE--HOMOCYSTEINE S-METHYLTRANSFERASE 1"/>
    <property type="match status" value="1"/>
</dbReference>
<dbReference type="PANTHER" id="PTHR46120:SF2">
    <property type="entry name" value="BETAINE--HOMOCYSTEINE S-METHYLTRANSFERASE 1"/>
    <property type="match status" value="1"/>
</dbReference>
<dbReference type="Pfam" id="PF02574">
    <property type="entry name" value="S-methyl_trans"/>
    <property type="match status" value="1"/>
</dbReference>
<dbReference type="PIRSF" id="PIRSF037505">
    <property type="entry name" value="Betaine_HMT"/>
    <property type="match status" value="1"/>
</dbReference>
<dbReference type="SUPFAM" id="SSF82282">
    <property type="entry name" value="Homocysteine S-methyltransferase"/>
    <property type="match status" value="1"/>
</dbReference>
<dbReference type="PROSITE" id="PS50970">
    <property type="entry name" value="HCY"/>
    <property type="match status" value="1"/>
</dbReference>
<accession>Q95332</accession>
<evidence type="ECO:0000250" key="1"/>
<evidence type="ECO:0000250" key="2">
    <source>
        <dbReference type="UniProtKB" id="O09171"/>
    </source>
</evidence>
<evidence type="ECO:0000250" key="3">
    <source>
        <dbReference type="UniProtKB" id="O35490"/>
    </source>
</evidence>
<evidence type="ECO:0000250" key="4">
    <source>
        <dbReference type="UniProtKB" id="Q93088"/>
    </source>
</evidence>
<evidence type="ECO:0000255" key="5">
    <source>
        <dbReference type="PROSITE-ProRule" id="PRU00333"/>
    </source>
</evidence>
<evidence type="ECO:0000269" key="6">
    <source>
    </source>
</evidence>
<evidence type="ECO:0000269" key="7">
    <source>
    </source>
</evidence>
<evidence type="ECO:0000303" key="8">
    <source>
    </source>
</evidence>
<evidence type="ECO:0000305" key="9">
    <source>
    </source>
</evidence>
<protein>
    <recommendedName>
        <fullName evidence="8">Betaine--homocysteine S-methyltransferase 1</fullName>
        <ecNumber evidence="6">2.1.1.5</ecNumber>
    </recommendedName>
</protein>
<sequence length="278" mass="30134">MAPVGDKKAKKGILERLNSGEVVIGDGGFVFALEKRGYVKAGPWTPEAAVEHPEAVRQLHREFLRAGSNVMQTFTFYASEDKLENRGNYVAEKISGQKVNEAACDIARQVADEGDALVAGGVSQTPSYLSCKSETEVKKVFRQQLEVFMKKNVDFLIAEYFEHVEEAVWAVEALKASGKPVAATMCIGPEGDLHGVTPGQCAVRLVKAGASIVGVNCHFDPTISLQTVKLMKEGLQAAGLKAHLMSQPLAYHTPDCGKQGFIDLPEFPFGLEPRVATR</sequence>
<gene>
    <name evidence="8" type="primary">BHMT</name>
</gene>
<organism>
    <name type="scientific">Sus scrofa</name>
    <name type="common">Pig</name>
    <dbReference type="NCBI Taxonomy" id="9823"/>
    <lineage>
        <taxon>Eukaryota</taxon>
        <taxon>Metazoa</taxon>
        <taxon>Chordata</taxon>
        <taxon>Craniata</taxon>
        <taxon>Vertebrata</taxon>
        <taxon>Euteleostomi</taxon>
        <taxon>Mammalia</taxon>
        <taxon>Eutheria</taxon>
        <taxon>Laurasiatheria</taxon>
        <taxon>Artiodactyla</taxon>
        <taxon>Suina</taxon>
        <taxon>Suidae</taxon>
        <taxon>Sus</taxon>
    </lineage>
</organism>
<name>BHMT1_PIG</name>
<feature type="initiator methionine" description="Removed" evidence="6">
    <location>
        <position position="1"/>
    </location>
</feature>
<feature type="chain" id="PRO_0000114623" description="Betaine--homocysteine S-methyltransferase 1">
    <location>
        <begin position="2"/>
        <end position="278" status="greater than"/>
    </location>
</feature>
<feature type="domain" description="Hcy-binding" evidence="5">
    <location>
        <begin position="11"/>
        <end position="278" status="greater than"/>
    </location>
</feature>
<feature type="binding site" evidence="4 5">
    <location>
        <position position="217"/>
    </location>
    <ligand>
        <name>Zn(2+)</name>
        <dbReference type="ChEBI" id="CHEBI:29105"/>
    </ligand>
</feature>
<feature type="modified residue" description="N6-succinyllysine" evidence="3">
    <location>
        <position position="40"/>
    </location>
</feature>
<feature type="modified residue" description="N6-succinyllysine" evidence="3">
    <location>
        <position position="93"/>
    </location>
</feature>
<feature type="modified residue" description="N6-succinyllysine" evidence="3">
    <location>
        <position position="98"/>
    </location>
</feature>
<feature type="modified residue" description="N6-succinyllysine" evidence="3">
    <location>
        <position position="232"/>
    </location>
</feature>
<feature type="modified residue" description="N6-succinyllysine" evidence="3">
    <location>
        <position position="241"/>
    </location>
</feature>
<feature type="non-terminal residue">
    <location>
        <position position="278"/>
    </location>
</feature>
<comment type="function">
    <text evidence="6">Involved in the regulation of homocysteine metabolism. Converts betaine and homocysteine to dimethylglycine and methionine, respectively. This reaction is also required for the irreversible oxidation of choline.</text>
</comment>
<comment type="catalytic activity">
    <reaction evidence="6">
        <text>L-homocysteine + glycine betaine = N,N-dimethylglycine + L-methionine</text>
        <dbReference type="Rhea" id="RHEA:22336"/>
        <dbReference type="ChEBI" id="CHEBI:17750"/>
        <dbReference type="ChEBI" id="CHEBI:57844"/>
        <dbReference type="ChEBI" id="CHEBI:58199"/>
        <dbReference type="ChEBI" id="CHEBI:58251"/>
        <dbReference type="EC" id="2.1.1.5"/>
    </reaction>
    <physiologicalReaction direction="left-to-right" evidence="9">
        <dbReference type="Rhea" id="RHEA:22337"/>
    </physiologicalReaction>
</comment>
<comment type="cofactor">
    <cofactor evidence="1">
        <name>Zn(2+)</name>
        <dbReference type="ChEBI" id="CHEBI:29105"/>
    </cofactor>
    <text evidence="1">Binds 1 zinc ion per subunit.</text>
</comment>
<comment type="activity regulation">
    <text evidence="6">Inhibited by dimethylglycine and methylthioacetate.</text>
</comment>
<comment type="biophysicochemical properties">
    <kinetics>
        <KM evidence="6">23 uM for glycine betaine</KM>
        <KM evidence="6">32 uM for L-homocysteine</KM>
    </kinetics>
</comment>
<comment type="pathway">
    <text>Amine and polyamine degradation; betaine degradation; sarcosine from betaine: step 1/2.</text>
</comment>
<comment type="pathway">
    <text>Amino-acid biosynthesis; L-methionine biosynthesis via de novo pathway; L-methionine from L-homocysteine (BhmT route): step 1/1.</text>
</comment>
<comment type="subunit">
    <text evidence="1">Homotetramer.</text>
</comment>
<comment type="subcellular location">
    <subcellularLocation>
        <location evidence="2">Cytoplasm</location>
        <location evidence="2">Cytosol</location>
    </subcellularLocation>
    <subcellularLocation>
        <location evidence="2">Nucleus</location>
    </subcellularLocation>
    <text evidence="2">Predominantly localized in the cytoplasm with a small fraction detected in the nucleus. Translocates into the nucleus upon oxidative stress.</text>
</comment>
<comment type="tissue specificity">
    <text evidence="7">Found exclusively in liver and kidney.</text>
</comment>
<keyword id="KW-0963">Cytoplasm</keyword>
<keyword id="KW-0903">Direct protein sequencing</keyword>
<keyword id="KW-0479">Metal-binding</keyword>
<keyword id="KW-0489">Methyltransferase</keyword>
<keyword id="KW-0539">Nucleus</keyword>
<keyword id="KW-1185">Reference proteome</keyword>
<keyword id="KW-0808">Transferase</keyword>
<keyword id="KW-0862">Zinc</keyword>